<organism evidence="4">
    <name type="scientific">Mus musculus</name>
    <name type="common">Mouse</name>
    <dbReference type="NCBI Taxonomy" id="10090"/>
    <lineage>
        <taxon>Eukaryota</taxon>
        <taxon>Metazoa</taxon>
        <taxon>Chordata</taxon>
        <taxon>Craniata</taxon>
        <taxon>Vertebrata</taxon>
        <taxon>Euteleostomi</taxon>
        <taxon>Mammalia</taxon>
        <taxon>Eutheria</taxon>
        <taxon>Euarchontoglires</taxon>
        <taxon>Glires</taxon>
        <taxon>Rodentia</taxon>
        <taxon>Myomorpha</taxon>
        <taxon>Muroidea</taxon>
        <taxon>Muridae</taxon>
        <taxon>Murinae</taxon>
        <taxon>Mus</taxon>
        <taxon>Mus</taxon>
    </lineage>
</organism>
<proteinExistence type="evidence at protein level"/>
<sequence length="128" mass="14174">MTEADVNPKAYPLADAHLTKKLLDLVQQSCNYKQLRKGANEATKTLNRGISEFIVMAADAEPLEIILHLPLLCEDKNVPYVFVRSKQALGRACGVSRPVIACSVTIKEGSQLKQQIQSIQQSIERLLV</sequence>
<dbReference type="EMBL" id="U95114">
    <property type="protein sequence ID" value="AAC53177.1"/>
    <property type="status" value="ALT_FRAME"/>
    <property type="molecule type" value="mRNA"/>
</dbReference>
<dbReference type="EMBL" id="AK004489">
    <property type="protein sequence ID" value="BAB23329.1"/>
    <property type="molecule type" value="mRNA"/>
</dbReference>
<dbReference type="EMBL" id="AK134943">
    <property type="protein sequence ID" value="BAE22349.1"/>
    <property type="molecule type" value="mRNA"/>
</dbReference>
<dbReference type="EMBL" id="AK145608">
    <property type="protein sequence ID" value="BAE26537.1"/>
    <property type="molecule type" value="mRNA"/>
</dbReference>
<dbReference type="EMBL" id="AK168930">
    <property type="protein sequence ID" value="BAE40743.1"/>
    <property type="molecule type" value="mRNA"/>
</dbReference>
<dbReference type="EMBL" id="AK169103">
    <property type="protein sequence ID" value="BAE40885.1"/>
    <property type="molecule type" value="mRNA"/>
</dbReference>
<dbReference type="EMBL" id="BC026755">
    <property type="protein sequence ID" value="AAH26755.1"/>
    <property type="molecule type" value="mRNA"/>
</dbReference>
<dbReference type="EMBL" id="BC054450">
    <property type="protein sequence ID" value="AAH54450.1"/>
    <property type="molecule type" value="mRNA"/>
</dbReference>
<dbReference type="EMBL" id="BC083315">
    <property type="protein sequence ID" value="AAH83315.1"/>
    <property type="molecule type" value="mRNA"/>
</dbReference>
<dbReference type="CCDS" id="CCDS37154.1"/>
<dbReference type="PIR" id="T10105">
    <property type="entry name" value="T10105"/>
</dbReference>
<dbReference type="RefSeq" id="NP_035612.2">
    <property type="nucleotide sequence ID" value="NM_011482.4"/>
</dbReference>
<dbReference type="RefSeq" id="XP_003689233.1">
    <property type="nucleotide sequence ID" value="XM_003689185.5"/>
</dbReference>
<dbReference type="BMRB" id="Q9D0T1"/>
<dbReference type="SMR" id="Q9D0T1"/>
<dbReference type="BioGRID" id="203509">
    <property type="interactions" value="52"/>
</dbReference>
<dbReference type="FunCoup" id="Q9D0T1">
    <property type="interactions" value="2889"/>
</dbReference>
<dbReference type="IntAct" id="Q9D0T1">
    <property type="interactions" value="52"/>
</dbReference>
<dbReference type="MINT" id="Q9D0T1"/>
<dbReference type="STRING" id="10090.ENSMUSP00000091840"/>
<dbReference type="iPTMnet" id="Q9D0T1"/>
<dbReference type="PhosphoSitePlus" id="Q9D0T1"/>
<dbReference type="SwissPalm" id="Q9D0T1"/>
<dbReference type="jPOST" id="Q9D0T1"/>
<dbReference type="PaxDb" id="10090-ENSMUSP00000091840"/>
<dbReference type="PeptideAtlas" id="Q9D0T1"/>
<dbReference type="ProteomicsDB" id="287506"/>
<dbReference type="Pumba" id="Q9D0T1"/>
<dbReference type="TopDownProteomics" id="Q9D0T1"/>
<dbReference type="Antibodypedia" id="27035">
    <property type="antibodies" value="107 antibodies from 26 providers"/>
</dbReference>
<dbReference type="DNASU" id="20826"/>
<dbReference type="Ensembl" id="ENSMUST00000080622.9">
    <property type="protein sequence ID" value="ENSMUSP00000091840.6"/>
    <property type="gene ID" value="ENSMUSG00000063480.9"/>
</dbReference>
<dbReference type="GeneID" id="20826"/>
<dbReference type="KEGG" id="mmu:20826"/>
<dbReference type="UCSC" id="uc007wya.1">
    <property type="organism name" value="mouse"/>
</dbReference>
<dbReference type="AGR" id="MGI:893586"/>
<dbReference type="CTD" id="4809"/>
<dbReference type="MGI" id="MGI:893586">
    <property type="gene designation" value="Snu13"/>
</dbReference>
<dbReference type="VEuPathDB" id="HostDB:ENSMUSG00000063480"/>
<dbReference type="eggNOG" id="KOG3387">
    <property type="taxonomic scope" value="Eukaryota"/>
</dbReference>
<dbReference type="GeneTree" id="ENSGT00550000074840"/>
<dbReference type="HOGENOM" id="CLU_084513_4_1_1"/>
<dbReference type="InParanoid" id="Q9D0T1"/>
<dbReference type="OMA" id="IKNQIYA"/>
<dbReference type="OrthoDB" id="1924699at2759"/>
<dbReference type="PhylomeDB" id="Q9D0T1"/>
<dbReference type="TreeFam" id="TF300184"/>
<dbReference type="Reactome" id="R-MMU-6791226">
    <property type="pathway name" value="Major pathway of rRNA processing in the nucleolus and cytosol"/>
</dbReference>
<dbReference type="Reactome" id="R-MMU-72163">
    <property type="pathway name" value="mRNA Splicing - Major Pathway"/>
</dbReference>
<dbReference type="BioGRID-ORCS" id="20826">
    <property type="hits" value="26 hits in 57 CRISPR screens"/>
</dbReference>
<dbReference type="ChiTaRS" id="Nhp2l1">
    <property type="organism name" value="mouse"/>
</dbReference>
<dbReference type="PRO" id="PR:Q9D0T1"/>
<dbReference type="Proteomes" id="UP000000589">
    <property type="component" value="Chromosome 15"/>
</dbReference>
<dbReference type="RNAct" id="Q9D0T1">
    <property type="molecule type" value="protein"/>
</dbReference>
<dbReference type="Bgee" id="ENSMUSG00000063480">
    <property type="expression patterns" value="Expressed in epiblast (generic) and 66 other cell types or tissues"/>
</dbReference>
<dbReference type="GO" id="GO:0031428">
    <property type="term" value="C:box C/D methylation guide snoRNP complex"/>
    <property type="evidence" value="ECO:0000315"/>
    <property type="project" value="CAFA"/>
</dbReference>
<dbReference type="GO" id="GO:0001651">
    <property type="term" value="C:dense fibrillar component"/>
    <property type="evidence" value="ECO:0007669"/>
    <property type="project" value="Ensembl"/>
</dbReference>
<dbReference type="GO" id="GO:0005634">
    <property type="term" value="C:nucleus"/>
    <property type="evidence" value="ECO:0000250"/>
    <property type="project" value="UniProtKB"/>
</dbReference>
<dbReference type="GO" id="GO:0005886">
    <property type="term" value="C:plasma membrane"/>
    <property type="evidence" value="ECO:0000250"/>
    <property type="project" value="MGI"/>
</dbReference>
<dbReference type="GO" id="GO:0032040">
    <property type="term" value="C:small-subunit processome"/>
    <property type="evidence" value="ECO:0000250"/>
    <property type="project" value="UniProtKB"/>
</dbReference>
<dbReference type="GO" id="GO:0071005">
    <property type="term" value="C:U2-type precatalytic spliceosome"/>
    <property type="evidence" value="ECO:0000250"/>
    <property type="project" value="UniProtKB"/>
</dbReference>
<dbReference type="GO" id="GO:0046540">
    <property type="term" value="C:U4/U6 x U5 tri-snRNP complex"/>
    <property type="evidence" value="ECO:0000250"/>
    <property type="project" value="UniProtKB"/>
</dbReference>
<dbReference type="GO" id="GO:0005690">
    <property type="term" value="C:U4atac snRNP"/>
    <property type="evidence" value="ECO:0000250"/>
    <property type="project" value="UniProtKB"/>
</dbReference>
<dbReference type="GO" id="GO:0051117">
    <property type="term" value="F:ATPase binding"/>
    <property type="evidence" value="ECO:0007669"/>
    <property type="project" value="Ensembl"/>
</dbReference>
<dbReference type="GO" id="GO:0034512">
    <property type="term" value="F:box C/D sno(s)RNA binding"/>
    <property type="evidence" value="ECO:0000315"/>
    <property type="project" value="CAFA"/>
</dbReference>
<dbReference type="GO" id="GO:0034511">
    <property type="term" value="F:U3 snoRNA binding"/>
    <property type="evidence" value="ECO:0007669"/>
    <property type="project" value="Ensembl"/>
</dbReference>
<dbReference type="GO" id="GO:0030621">
    <property type="term" value="F:U4 snRNA binding"/>
    <property type="evidence" value="ECO:0007669"/>
    <property type="project" value="Ensembl"/>
</dbReference>
<dbReference type="GO" id="GO:0030622">
    <property type="term" value="F:U4atac snRNA binding"/>
    <property type="evidence" value="ECO:0000250"/>
    <property type="project" value="UniProtKB"/>
</dbReference>
<dbReference type="GO" id="GO:0000492">
    <property type="term" value="P:box C/D snoRNP assembly"/>
    <property type="evidence" value="ECO:0000315"/>
    <property type="project" value="CAFA"/>
</dbReference>
<dbReference type="GO" id="GO:0000398">
    <property type="term" value="P:mRNA splicing, via spliceosome"/>
    <property type="evidence" value="ECO:0000250"/>
    <property type="project" value="UniProtKB"/>
</dbReference>
<dbReference type="GO" id="GO:0042274">
    <property type="term" value="P:ribosomal small subunit biogenesis"/>
    <property type="evidence" value="ECO:0000250"/>
    <property type="project" value="UniProtKB"/>
</dbReference>
<dbReference type="GO" id="GO:0007338">
    <property type="term" value="P:single fertilization"/>
    <property type="evidence" value="ECO:0000314"/>
    <property type="project" value="MGI"/>
</dbReference>
<dbReference type="CDD" id="cd21104">
    <property type="entry name" value="SNU13"/>
    <property type="match status" value="1"/>
</dbReference>
<dbReference type="FunFam" id="3.30.1330.30:FF:000002">
    <property type="entry name" value="NHP2-like protein 1 homolog"/>
    <property type="match status" value="1"/>
</dbReference>
<dbReference type="Gene3D" id="3.30.1330.30">
    <property type="match status" value="1"/>
</dbReference>
<dbReference type="InterPro" id="IPR050257">
    <property type="entry name" value="eL8/uL1-like"/>
</dbReference>
<dbReference type="InterPro" id="IPR002415">
    <property type="entry name" value="H/ACA_rnp_Nhp2-like"/>
</dbReference>
<dbReference type="InterPro" id="IPR029064">
    <property type="entry name" value="Ribosomal_eL30-like_sf"/>
</dbReference>
<dbReference type="InterPro" id="IPR004037">
    <property type="entry name" value="Ribosomal_eL8-like_CS"/>
</dbReference>
<dbReference type="InterPro" id="IPR004038">
    <property type="entry name" value="Ribosomal_eL8/eL30/eS12/Gad45"/>
</dbReference>
<dbReference type="InterPro" id="IPR018492">
    <property type="entry name" value="Ribosomal_eL8/Nhp2"/>
</dbReference>
<dbReference type="PANTHER" id="PTHR23105">
    <property type="entry name" value="RIBOSOMAL PROTEIN L7AE FAMILY MEMBER"/>
    <property type="match status" value="1"/>
</dbReference>
<dbReference type="Pfam" id="PF01248">
    <property type="entry name" value="Ribosomal_L7Ae"/>
    <property type="match status" value="1"/>
</dbReference>
<dbReference type="PRINTS" id="PR00881">
    <property type="entry name" value="L7ARS6FAMILY"/>
</dbReference>
<dbReference type="PRINTS" id="PR00883">
    <property type="entry name" value="NUCLEARHMG"/>
</dbReference>
<dbReference type="SUPFAM" id="SSF55315">
    <property type="entry name" value="L30e-like"/>
    <property type="match status" value="1"/>
</dbReference>
<dbReference type="PROSITE" id="PS01082">
    <property type="entry name" value="RIBOSOMAL_L7AE"/>
    <property type="match status" value="1"/>
</dbReference>
<accession>Q9D0T1</accession>
<accession>O08754</accession>
<accession>Q3UY64</accession>
<gene>
    <name evidence="1" type="primary">Snu13</name>
    <name evidence="5" type="synonym">Nhp2l1</name>
    <name type="synonym">Ssfa1</name>
</gene>
<name>NH2L1_MOUSE</name>
<protein>
    <recommendedName>
        <fullName>NHP2-like protein 1</fullName>
    </recommendedName>
    <alternativeName>
        <fullName evidence="2">Fertilization antigen 1</fullName>
        <shortName>FA-1</shortName>
    </alternativeName>
    <alternativeName>
        <fullName>High mobility group-like nuclear protein 2 homolog 1</fullName>
    </alternativeName>
    <alternativeName>
        <fullName>Sperm-specific antigen 1</fullName>
    </alternativeName>
    <alternativeName>
        <fullName evidence="1">U4/U6.U5 small nuclear ribonucleoprotein SNU13</fullName>
    </alternativeName>
    <alternativeName>
        <fullName>U4/U6.U5 tri-snRNP 15.5 kDa protein</fullName>
    </alternativeName>
    <component>
        <recommendedName>
            <fullName>NHP2-like protein 1, N-terminally processed</fullName>
        </recommendedName>
    </component>
</protein>
<keyword id="KW-0007">Acetylation</keyword>
<keyword id="KW-0507">mRNA processing</keyword>
<keyword id="KW-0508">mRNA splicing</keyword>
<keyword id="KW-0539">Nucleus</keyword>
<keyword id="KW-0597">Phosphoprotein</keyword>
<keyword id="KW-1185">Reference proteome</keyword>
<keyword id="KW-0687">Ribonucleoprotein</keyword>
<keyword id="KW-0694">RNA-binding</keyword>
<keyword id="KW-0747">Spliceosome</keyword>
<comment type="function">
    <text evidence="1">Part of the small subunit (SSU) processome, first precursor of the small eukaryotic ribosomal subunit. During the assembly of the SSU processome in the nucleolus, many ribosome biogenesis factors, an RNA chaperone and ribosomal proteins associate with the nascent pre-rRNA and work in concert to generate RNA folding, modifications, rearrangements and cleavage as well as targeted degradation of pre-ribosomal RNA by the RNA exosome. Involved in pre-mRNA splicing as component of the spliceosome. Binds to the 5'-stem-loop of U4 snRNA and thereby contributes to spliceosome assembly. The protein undergoes a conformational change upon RNA-binding. Core component of box C/D small nucleolar ribonucleoprotein (snoRNP) complexes that function in methylation of multiple sites on ribosomal RNAs (rRNAs) and messenger RNAs (mRNAs) (By similarity).</text>
</comment>
<comment type="subunit">
    <text evidence="1">Identified in the spliceosome B complex. Component of the U4/U6-U5 tri-snRNP complex composed of the U4, U6 and U5 snRNAs and at least PRPF3, PRPF4, PRPF6, PRPF8, PRPF31, SNRNP200, TXNL4A, WDR57, SNRNP40, DDX23, CD2BP2, PPIH, NHP2L1, EFTUD2, SART1 and USP39. Interacts with RAD17 and PRPF31. The complex formed by SNU13 and PRPF31 binds U4 snRNA. The complex formed by SNU13 and PRPF31 also binds U4atac snRNA, a characteristic component of specific, less abundant spliceosomal complexes. Part of the small subunit (SSU) processome, composed of more than 70 proteins and the RNA chaperone small nucleolar RNA (snoRNA) U3. Core component of box C/D small nucleolar ribonucleoprotein (snoRNP) particles; the core proteins SNU13, NOP56, NOP58 and FBL or FBLL1 assemble stepwise onto the snoRNA (By similarity).</text>
</comment>
<comment type="subcellular location">
    <subcellularLocation>
        <location evidence="1">Nucleus</location>
    </subcellularLocation>
    <subcellularLocation>
        <location evidence="1">Nucleus</location>
        <location evidence="1">Nucleolus</location>
    </subcellularLocation>
    <text evidence="1">Concentrated in the dense fibrillar component of the nucleolus.</text>
</comment>
<comment type="similarity">
    <text evidence="3">Belongs to the eukaryotic ribosomal protein eL8 family.</text>
</comment>
<comment type="sequence caution" evidence="3">
    <conflict type="frameshift">
        <sequence resource="EMBL-CDS" id="AAC53177"/>
    </conflict>
</comment>
<evidence type="ECO:0000250" key="1">
    <source>
        <dbReference type="UniProtKB" id="P55769"/>
    </source>
</evidence>
<evidence type="ECO:0000303" key="2">
    <source>
    </source>
</evidence>
<evidence type="ECO:0000305" key="3"/>
<evidence type="ECO:0000312" key="4">
    <source>
        <dbReference type="EMBL" id="BAB23329.1"/>
    </source>
</evidence>
<evidence type="ECO:0000312" key="5">
    <source>
        <dbReference type="MGI" id="MGI:893586"/>
    </source>
</evidence>
<evidence type="ECO:0007744" key="6">
    <source>
    </source>
</evidence>
<feature type="chain" id="PRO_0000423262" description="NHP2-like protein 1">
    <location>
        <begin position="1"/>
        <end position="128"/>
    </location>
</feature>
<feature type="initiator methionine" description="Removed; alternate" evidence="1">
    <location>
        <position position="1"/>
    </location>
</feature>
<feature type="chain" id="PRO_0000136779" description="NHP2-like protein 1, N-terminally processed">
    <location>
        <begin position="2"/>
        <end position="128"/>
    </location>
</feature>
<feature type="region of interest" description="Interaction with U4 snRNA and U4atac snRNA" evidence="1">
    <location>
        <begin position="36"/>
        <end position="48"/>
    </location>
</feature>
<feature type="region of interest" description="Important for U4 snRNA-binding" evidence="1">
    <location>
        <begin position="96"/>
        <end position="128"/>
    </location>
</feature>
<feature type="site" description="Interaction with U4 snRNA and U4atac snRNA" evidence="1">
    <location>
        <position position="61"/>
    </location>
</feature>
<feature type="site" description="Interaction with U4 snRNA and U4atac snRNA" evidence="1">
    <location>
        <position position="86"/>
    </location>
</feature>
<feature type="modified residue" description="N-acetylmethionine" evidence="1">
    <location>
        <position position="1"/>
    </location>
</feature>
<feature type="modified residue" description="N-acetylthreonine; in NHP2-like protein 1, N-terminally processed" evidence="1">
    <location>
        <position position="2"/>
    </location>
</feature>
<feature type="modified residue" description="N6-acetyllysine" evidence="6">
    <location>
        <position position="21"/>
    </location>
</feature>
<feature type="modified residue" description="Phosphoserine" evidence="1">
    <location>
        <position position="122"/>
    </location>
</feature>
<feature type="sequence conflict" description="In Ref. 2; BAB23329." evidence="3" ref="2">
    <original>K</original>
    <variation>R</variation>
    <location>
        <position position="9"/>
    </location>
</feature>
<reference evidence="3" key="1">
    <citation type="journal article" date="1997" name="Proc. Natl. Acad. Sci. U.S.A.">
        <title>Fertilization antigen-1: cDNA cloning, testis-specific expression, and immunocontraceptive effects.</title>
        <authorList>
            <person name="Zhu X."/>
            <person name="Naz R.K."/>
        </authorList>
    </citation>
    <scope>NUCLEOTIDE SEQUENCE [MRNA]</scope>
    <source>
        <strain>BALB/cJ</strain>
        <tissue>Testis</tissue>
    </source>
</reference>
<reference key="2">
    <citation type="journal article" date="2005" name="Science">
        <title>The transcriptional landscape of the mammalian genome.</title>
        <authorList>
            <person name="Carninci P."/>
            <person name="Kasukawa T."/>
            <person name="Katayama S."/>
            <person name="Gough J."/>
            <person name="Frith M.C."/>
            <person name="Maeda N."/>
            <person name="Oyama R."/>
            <person name="Ravasi T."/>
            <person name="Lenhard B."/>
            <person name="Wells C."/>
            <person name="Kodzius R."/>
            <person name="Shimokawa K."/>
            <person name="Bajic V.B."/>
            <person name="Brenner S.E."/>
            <person name="Batalov S."/>
            <person name="Forrest A.R."/>
            <person name="Zavolan M."/>
            <person name="Davis M.J."/>
            <person name="Wilming L.G."/>
            <person name="Aidinis V."/>
            <person name="Allen J.E."/>
            <person name="Ambesi-Impiombato A."/>
            <person name="Apweiler R."/>
            <person name="Aturaliya R.N."/>
            <person name="Bailey T.L."/>
            <person name="Bansal M."/>
            <person name="Baxter L."/>
            <person name="Beisel K.W."/>
            <person name="Bersano T."/>
            <person name="Bono H."/>
            <person name="Chalk A.M."/>
            <person name="Chiu K.P."/>
            <person name="Choudhary V."/>
            <person name="Christoffels A."/>
            <person name="Clutterbuck D.R."/>
            <person name="Crowe M.L."/>
            <person name="Dalla E."/>
            <person name="Dalrymple B.P."/>
            <person name="de Bono B."/>
            <person name="Della Gatta G."/>
            <person name="di Bernardo D."/>
            <person name="Down T."/>
            <person name="Engstrom P."/>
            <person name="Fagiolini M."/>
            <person name="Faulkner G."/>
            <person name="Fletcher C.F."/>
            <person name="Fukushima T."/>
            <person name="Furuno M."/>
            <person name="Futaki S."/>
            <person name="Gariboldi M."/>
            <person name="Georgii-Hemming P."/>
            <person name="Gingeras T.R."/>
            <person name="Gojobori T."/>
            <person name="Green R.E."/>
            <person name="Gustincich S."/>
            <person name="Harbers M."/>
            <person name="Hayashi Y."/>
            <person name="Hensch T.K."/>
            <person name="Hirokawa N."/>
            <person name="Hill D."/>
            <person name="Huminiecki L."/>
            <person name="Iacono M."/>
            <person name="Ikeo K."/>
            <person name="Iwama A."/>
            <person name="Ishikawa T."/>
            <person name="Jakt M."/>
            <person name="Kanapin A."/>
            <person name="Katoh M."/>
            <person name="Kawasawa Y."/>
            <person name="Kelso J."/>
            <person name="Kitamura H."/>
            <person name="Kitano H."/>
            <person name="Kollias G."/>
            <person name="Krishnan S.P."/>
            <person name="Kruger A."/>
            <person name="Kummerfeld S.K."/>
            <person name="Kurochkin I.V."/>
            <person name="Lareau L.F."/>
            <person name="Lazarevic D."/>
            <person name="Lipovich L."/>
            <person name="Liu J."/>
            <person name="Liuni S."/>
            <person name="McWilliam S."/>
            <person name="Madan Babu M."/>
            <person name="Madera M."/>
            <person name="Marchionni L."/>
            <person name="Matsuda H."/>
            <person name="Matsuzawa S."/>
            <person name="Miki H."/>
            <person name="Mignone F."/>
            <person name="Miyake S."/>
            <person name="Morris K."/>
            <person name="Mottagui-Tabar S."/>
            <person name="Mulder N."/>
            <person name="Nakano N."/>
            <person name="Nakauchi H."/>
            <person name="Ng P."/>
            <person name="Nilsson R."/>
            <person name="Nishiguchi S."/>
            <person name="Nishikawa S."/>
            <person name="Nori F."/>
            <person name="Ohara O."/>
            <person name="Okazaki Y."/>
            <person name="Orlando V."/>
            <person name="Pang K.C."/>
            <person name="Pavan W.J."/>
            <person name="Pavesi G."/>
            <person name="Pesole G."/>
            <person name="Petrovsky N."/>
            <person name="Piazza S."/>
            <person name="Reed J."/>
            <person name="Reid J.F."/>
            <person name="Ring B.Z."/>
            <person name="Ringwald M."/>
            <person name="Rost B."/>
            <person name="Ruan Y."/>
            <person name="Salzberg S.L."/>
            <person name="Sandelin A."/>
            <person name="Schneider C."/>
            <person name="Schoenbach C."/>
            <person name="Sekiguchi K."/>
            <person name="Semple C.A."/>
            <person name="Seno S."/>
            <person name="Sessa L."/>
            <person name="Sheng Y."/>
            <person name="Shibata Y."/>
            <person name="Shimada H."/>
            <person name="Shimada K."/>
            <person name="Silva D."/>
            <person name="Sinclair B."/>
            <person name="Sperling S."/>
            <person name="Stupka E."/>
            <person name="Sugiura K."/>
            <person name="Sultana R."/>
            <person name="Takenaka Y."/>
            <person name="Taki K."/>
            <person name="Tammoja K."/>
            <person name="Tan S.L."/>
            <person name="Tang S."/>
            <person name="Taylor M.S."/>
            <person name="Tegner J."/>
            <person name="Teichmann S.A."/>
            <person name="Ueda H.R."/>
            <person name="van Nimwegen E."/>
            <person name="Verardo R."/>
            <person name="Wei C.L."/>
            <person name="Yagi K."/>
            <person name="Yamanishi H."/>
            <person name="Zabarovsky E."/>
            <person name="Zhu S."/>
            <person name="Zimmer A."/>
            <person name="Hide W."/>
            <person name="Bult C."/>
            <person name="Grimmond S.M."/>
            <person name="Teasdale R.D."/>
            <person name="Liu E.T."/>
            <person name="Brusic V."/>
            <person name="Quackenbush J."/>
            <person name="Wahlestedt C."/>
            <person name="Mattick J.S."/>
            <person name="Hume D.A."/>
            <person name="Kai C."/>
            <person name="Sasaki D."/>
            <person name="Tomaru Y."/>
            <person name="Fukuda S."/>
            <person name="Kanamori-Katayama M."/>
            <person name="Suzuki M."/>
            <person name="Aoki J."/>
            <person name="Arakawa T."/>
            <person name="Iida J."/>
            <person name="Imamura K."/>
            <person name="Itoh M."/>
            <person name="Kato T."/>
            <person name="Kawaji H."/>
            <person name="Kawagashira N."/>
            <person name="Kawashima T."/>
            <person name="Kojima M."/>
            <person name="Kondo S."/>
            <person name="Konno H."/>
            <person name="Nakano K."/>
            <person name="Ninomiya N."/>
            <person name="Nishio T."/>
            <person name="Okada M."/>
            <person name="Plessy C."/>
            <person name="Shibata K."/>
            <person name="Shiraki T."/>
            <person name="Suzuki S."/>
            <person name="Tagami M."/>
            <person name="Waki K."/>
            <person name="Watahiki A."/>
            <person name="Okamura-Oho Y."/>
            <person name="Suzuki H."/>
            <person name="Kawai J."/>
            <person name="Hayashizaki Y."/>
        </authorList>
    </citation>
    <scope>NUCLEOTIDE SEQUENCE [LARGE SCALE MRNA]</scope>
    <source>
        <strain>C57BL/6J</strain>
        <tissue>Embryo</tissue>
        <tissue>Kidney</tissue>
        <tissue>Liver</tissue>
    </source>
</reference>
<reference key="3">
    <citation type="journal article" date="2004" name="Genome Res.">
        <title>The status, quality, and expansion of the NIH full-length cDNA project: the Mammalian Gene Collection (MGC).</title>
        <authorList>
            <consortium name="The MGC Project Team"/>
        </authorList>
    </citation>
    <scope>NUCLEOTIDE SEQUENCE [LARGE SCALE MRNA]</scope>
    <source>
        <strain>129</strain>
        <strain>C57BL/6J</strain>
        <strain>FVB/N</strain>
        <tissue>Mammary gland</tissue>
        <tissue>Retina</tissue>
    </source>
</reference>
<reference key="4">
    <citation type="journal article" date="2010" name="Cell">
        <title>A tissue-specific atlas of mouse protein phosphorylation and expression.</title>
        <authorList>
            <person name="Huttlin E.L."/>
            <person name="Jedrychowski M.P."/>
            <person name="Elias J.E."/>
            <person name="Goswami T."/>
            <person name="Rad R."/>
            <person name="Beausoleil S.A."/>
            <person name="Villen J."/>
            <person name="Haas W."/>
            <person name="Sowa M.E."/>
            <person name="Gygi S.P."/>
        </authorList>
    </citation>
    <scope>IDENTIFICATION BY MASS SPECTROMETRY [LARGE SCALE ANALYSIS]</scope>
    <source>
        <tissue>Brain</tissue>
        <tissue>Brown adipose tissue</tissue>
        <tissue>Kidney</tissue>
        <tissue>Liver</tissue>
        <tissue>Lung</tissue>
        <tissue>Pancreas</tissue>
        <tissue>Spleen</tissue>
        <tissue>Testis</tissue>
    </source>
</reference>
<reference key="5">
    <citation type="journal article" date="2013" name="Mol. Cell">
        <title>SIRT5-mediated lysine desuccinylation impacts diverse metabolic pathways.</title>
        <authorList>
            <person name="Park J."/>
            <person name="Chen Y."/>
            <person name="Tishkoff D.X."/>
            <person name="Peng C."/>
            <person name="Tan M."/>
            <person name="Dai L."/>
            <person name="Xie Z."/>
            <person name="Zhang Y."/>
            <person name="Zwaans B.M."/>
            <person name="Skinner M.E."/>
            <person name="Lombard D.B."/>
            <person name="Zhao Y."/>
        </authorList>
    </citation>
    <scope>ACETYLATION [LARGE SCALE ANALYSIS] AT LYS-21</scope>
    <scope>IDENTIFICATION BY MASS SPECTROMETRY [LARGE SCALE ANALYSIS]</scope>
    <source>
        <tissue>Embryonic fibroblast</tissue>
    </source>
</reference>